<evidence type="ECO:0000255" key="1">
    <source>
        <dbReference type="HAMAP-Rule" id="MF_00016"/>
    </source>
</evidence>
<protein>
    <recommendedName>
        <fullName evidence="1">Holliday junction branch migration complex subunit RuvB</fullName>
        <ecNumber evidence="1">3.6.4.-</ecNumber>
    </recommendedName>
</protein>
<comment type="function">
    <text evidence="1">The RuvA-RuvB-RuvC complex processes Holliday junction (HJ) DNA during genetic recombination and DNA repair, while the RuvA-RuvB complex plays an important role in the rescue of blocked DNA replication forks via replication fork reversal (RFR). RuvA specifically binds to HJ cruciform DNA, conferring on it an open structure. The RuvB hexamer acts as an ATP-dependent pump, pulling dsDNA into and through the RuvAB complex. RuvB forms 2 homohexamers on either side of HJ DNA bound by 1 or 2 RuvA tetramers; 4 subunits per hexamer contact DNA at a time. Coordinated motions by a converter formed by DNA-disengaged RuvB subunits stimulates ATP hydrolysis and nucleotide exchange. Immobilization of the converter enables RuvB to convert the ATP-contained energy into a lever motion, pulling 2 nucleotides of DNA out of the RuvA tetramer per ATP hydrolyzed, thus driving DNA branch migration. The RuvB motors rotate together with the DNA substrate, which together with the progressing nucleotide cycle form the mechanistic basis for DNA recombination by continuous HJ branch migration. Branch migration allows RuvC to scan DNA until it finds its consensus sequence, where it cleaves and resolves cruciform DNA.</text>
</comment>
<comment type="catalytic activity">
    <reaction evidence="1">
        <text>ATP + H2O = ADP + phosphate + H(+)</text>
        <dbReference type="Rhea" id="RHEA:13065"/>
        <dbReference type="ChEBI" id="CHEBI:15377"/>
        <dbReference type="ChEBI" id="CHEBI:15378"/>
        <dbReference type="ChEBI" id="CHEBI:30616"/>
        <dbReference type="ChEBI" id="CHEBI:43474"/>
        <dbReference type="ChEBI" id="CHEBI:456216"/>
    </reaction>
</comment>
<comment type="subunit">
    <text evidence="1">Homohexamer. Forms an RuvA(8)-RuvB(12)-Holliday junction (HJ) complex. HJ DNA is sandwiched between 2 RuvA tetramers; dsDNA enters through RuvA and exits via RuvB. An RuvB hexamer assembles on each DNA strand where it exits the tetramer. Each RuvB hexamer is contacted by two RuvA subunits (via domain III) on 2 adjacent RuvB subunits; this complex drives branch migration. In the full resolvosome a probable DNA-RuvA(4)-RuvB(12)-RuvC(2) complex forms which resolves the HJ.</text>
</comment>
<comment type="subcellular location">
    <subcellularLocation>
        <location evidence="1">Cytoplasm</location>
    </subcellularLocation>
</comment>
<comment type="domain">
    <text evidence="1">Has 3 domains, the large (RuvB-L) and small ATPase (RuvB-S) domains and the C-terminal head (RuvB-H) domain. The head domain binds DNA, while the ATPase domains jointly bind ATP, ADP or are empty depending on the state of the subunit in the translocation cycle. During a single DNA translocation step the structure of each domain remains the same, but their relative positions change.</text>
</comment>
<comment type="similarity">
    <text evidence="1">Belongs to the RuvB family.</text>
</comment>
<proteinExistence type="inferred from homology"/>
<dbReference type="EC" id="3.6.4.-" evidence="1"/>
<dbReference type="EMBL" id="AJ938182">
    <property type="protein sequence ID" value="CAI81199.1"/>
    <property type="molecule type" value="Genomic_DNA"/>
</dbReference>
<dbReference type="RefSeq" id="WP_001005765.1">
    <property type="nucleotide sequence ID" value="NC_007622.1"/>
</dbReference>
<dbReference type="SMR" id="Q2YT89"/>
<dbReference type="KEGG" id="sab:SAB1510c"/>
<dbReference type="HOGENOM" id="CLU_055599_1_0_9"/>
<dbReference type="GO" id="GO:0005737">
    <property type="term" value="C:cytoplasm"/>
    <property type="evidence" value="ECO:0007669"/>
    <property type="project" value="UniProtKB-SubCell"/>
</dbReference>
<dbReference type="GO" id="GO:0048476">
    <property type="term" value="C:Holliday junction resolvase complex"/>
    <property type="evidence" value="ECO:0007669"/>
    <property type="project" value="UniProtKB-UniRule"/>
</dbReference>
<dbReference type="GO" id="GO:0005524">
    <property type="term" value="F:ATP binding"/>
    <property type="evidence" value="ECO:0007669"/>
    <property type="project" value="UniProtKB-UniRule"/>
</dbReference>
<dbReference type="GO" id="GO:0016887">
    <property type="term" value="F:ATP hydrolysis activity"/>
    <property type="evidence" value="ECO:0007669"/>
    <property type="project" value="InterPro"/>
</dbReference>
<dbReference type="GO" id="GO:0000400">
    <property type="term" value="F:four-way junction DNA binding"/>
    <property type="evidence" value="ECO:0007669"/>
    <property type="project" value="UniProtKB-UniRule"/>
</dbReference>
<dbReference type="GO" id="GO:0009378">
    <property type="term" value="F:four-way junction helicase activity"/>
    <property type="evidence" value="ECO:0007669"/>
    <property type="project" value="InterPro"/>
</dbReference>
<dbReference type="GO" id="GO:0006310">
    <property type="term" value="P:DNA recombination"/>
    <property type="evidence" value="ECO:0007669"/>
    <property type="project" value="UniProtKB-UniRule"/>
</dbReference>
<dbReference type="GO" id="GO:0006281">
    <property type="term" value="P:DNA repair"/>
    <property type="evidence" value="ECO:0007669"/>
    <property type="project" value="UniProtKB-UniRule"/>
</dbReference>
<dbReference type="CDD" id="cd00009">
    <property type="entry name" value="AAA"/>
    <property type="match status" value="1"/>
</dbReference>
<dbReference type="Gene3D" id="1.10.8.60">
    <property type="match status" value="1"/>
</dbReference>
<dbReference type="Gene3D" id="3.40.50.300">
    <property type="entry name" value="P-loop containing nucleotide triphosphate hydrolases"/>
    <property type="match status" value="1"/>
</dbReference>
<dbReference type="Gene3D" id="1.10.10.10">
    <property type="entry name" value="Winged helix-like DNA-binding domain superfamily/Winged helix DNA-binding domain"/>
    <property type="match status" value="1"/>
</dbReference>
<dbReference type="HAMAP" id="MF_00016">
    <property type="entry name" value="DNA_HJ_migration_RuvB"/>
    <property type="match status" value="1"/>
</dbReference>
<dbReference type="InterPro" id="IPR003593">
    <property type="entry name" value="AAA+_ATPase"/>
</dbReference>
<dbReference type="InterPro" id="IPR041445">
    <property type="entry name" value="AAA_lid_4"/>
</dbReference>
<dbReference type="InterPro" id="IPR004605">
    <property type="entry name" value="DNA_helicase_Holl-junc_RuvB"/>
</dbReference>
<dbReference type="InterPro" id="IPR027417">
    <property type="entry name" value="P-loop_NTPase"/>
</dbReference>
<dbReference type="InterPro" id="IPR008824">
    <property type="entry name" value="RuvB-like_N"/>
</dbReference>
<dbReference type="InterPro" id="IPR008823">
    <property type="entry name" value="RuvB_C"/>
</dbReference>
<dbReference type="InterPro" id="IPR036388">
    <property type="entry name" value="WH-like_DNA-bd_sf"/>
</dbReference>
<dbReference type="InterPro" id="IPR036390">
    <property type="entry name" value="WH_DNA-bd_sf"/>
</dbReference>
<dbReference type="NCBIfam" id="NF000868">
    <property type="entry name" value="PRK00080.1"/>
    <property type="match status" value="1"/>
</dbReference>
<dbReference type="NCBIfam" id="TIGR00635">
    <property type="entry name" value="ruvB"/>
    <property type="match status" value="1"/>
</dbReference>
<dbReference type="PANTHER" id="PTHR42848">
    <property type="match status" value="1"/>
</dbReference>
<dbReference type="PANTHER" id="PTHR42848:SF1">
    <property type="entry name" value="HOLLIDAY JUNCTION BRANCH MIGRATION COMPLEX SUBUNIT RUVB"/>
    <property type="match status" value="1"/>
</dbReference>
<dbReference type="Pfam" id="PF17864">
    <property type="entry name" value="AAA_lid_4"/>
    <property type="match status" value="1"/>
</dbReference>
<dbReference type="Pfam" id="PF05491">
    <property type="entry name" value="RuvB_C"/>
    <property type="match status" value="1"/>
</dbReference>
<dbReference type="Pfam" id="PF05496">
    <property type="entry name" value="RuvB_N"/>
    <property type="match status" value="1"/>
</dbReference>
<dbReference type="SMART" id="SM00382">
    <property type="entry name" value="AAA"/>
    <property type="match status" value="1"/>
</dbReference>
<dbReference type="SUPFAM" id="SSF52540">
    <property type="entry name" value="P-loop containing nucleoside triphosphate hydrolases"/>
    <property type="match status" value="1"/>
</dbReference>
<dbReference type="SUPFAM" id="SSF46785">
    <property type="entry name" value="Winged helix' DNA-binding domain"/>
    <property type="match status" value="1"/>
</dbReference>
<feature type="chain" id="PRO_0000235408" description="Holliday junction branch migration complex subunit RuvB">
    <location>
        <begin position="1"/>
        <end position="334"/>
    </location>
</feature>
<feature type="region of interest" description="Large ATPase domain (RuvB-L)" evidence="1">
    <location>
        <begin position="1"/>
        <end position="182"/>
    </location>
</feature>
<feature type="region of interest" description="Small ATPAse domain (RuvB-S)" evidence="1">
    <location>
        <begin position="183"/>
        <end position="253"/>
    </location>
</feature>
<feature type="region of interest" description="Head domain (RuvB-H)" evidence="1">
    <location>
        <begin position="256"/>
        <end position="334"/>
    </location>
</feature>
<feature type="binding site" evidence="1">
    <location>
        <position position="21"/>
    </location>
    <ligand>
        <name>ATP</name>
        <dbReference type="ChEBI" id="CHEBI:30616"/>
    </ligand>
</feature>
<feature type="binding site" evidence="1">
    <location>
        <position position="22"/>
    </location>
    <ligand>
        <name>ATP</name>
        <dbReference type="ChEBI" id="CHEBI:30616"/>
    </ligand>
</feature>
<feature type="binding site" evidence="1">
    <location>
        <position position="63"/>
    </location>
    <ligand>
        <name>ATP</name>
        <dbReference type="ChEBI" id="CHEBI:30616"/>
    </ligand>
</feature>
<feature type="binding site" evidence="1">
    <location>
        <position position="66"/>
    </location>
    <ligand>
        <name>ATP</name>
        <dbReference type="ChEBI" id="CHEBI:30616"/>
    </ligand>
</feature>
<feature type="binding site" evidence="1">
    <location>
        <position position="67"/>
    </location>
    <ligand>
        <name>ATP</name>
        <dbReference type="ChEBI" id="CHEBI:30616"/>
    </ligand>
</feature>
<feature type="binding site" evidence="1">
    <location>
        <position position="67"/>
    </location>
    <ligand>
        <name>Mg(2+)</name>
        <dbReference type="ChEBI" id="CHEBI:18420"/>
    </ligand>
</feature>
<feature type="binding site" evidence="1">
    <location>
        <position position="68"/>
    </location>
    <ligand>
        <name>ATP</name>
        <dbReference type="ChEBI" id="CHEBI:30616"/>
    </ligand>
</feature>
<feature type="binding site" evidence="1">
    <location>
        <begin position="129"/>
        <end position="131"/>
    </location>
    <ligand>
        <name>ATP</name>
        <dbReference type="ChEBI" id="CHEBI:30616"/>
    </ligand>
</feature>
<feature type="binding site" evidence="1">
    <location>
        <position position="172"/>
    </location>
    <ligand>
        <name>ATP</name>
        <dbReference type="ChEBI" id="CHEBI:30616"/>
    </ligand>
</feature>
<feature type="binding site" evidence="1">
    <location>
        <position position="182"/>
    </location>
    <ligand>
        <name>ATP</name>
        <dbReference type="ChEBI" id="CHEBI:30616"/>
    </ligand>
</feature>
<feature type="binding site" evidence="1">
    <location>
        <position position="219"/>
    </location>
    <ligand>
        <name>ATP</name>
        <dbReference type="ChEBI" id="CHEBI:30616"/>
    </ligand>
</feature>
<feature type="binding site" evidence="1">
    <location>
        <position position="292"/>
    </location>
    <ligand>
        <name>DNA</name>
        <dbReference type="ChEBI" id="CHEBI:16991"/>
    </ligand>
</feature>
<feature type="binding site" evidence="1">
    <location>
        <position position="311"/>
    </location>
    <ligand>
        <name>DNA</name>
        <dbReference type="ChEBI" id="CHEBI:16991"/>
    </ligand>
</feature>
<feature type="binding site" evidence="1">
    <location>
        <position position="316"/>
    </location>
    <ligand>
        <name>DNA</name>
        <dbReference type="ChEBI" id="CHEBI:16991"/>
    </ligand>
</feature>
<accession>Q2YT89</accession>
<gene>
    <name evidence="1" type="primary">ruvB</name>
    <name type="ordered locus">SAB1510c</name>
</gene>
<reference key="1">
    <citation type="journal article" date="2007" name="PLoS ONE">
        <title>Molecular correlates of host specialization in Staphylococcus aureus.</title>
        <authorList>
            <person name="Herron-Olson L."/>
            <person name="Fitzgerald J.R."/>
            <person name="Musser J.M."/>
            <person name="Kapur V."/>
        </authorList>
    </citation>
    <scope>NUCLEOTIDE SEQUENCE [LARGE SCALE GENOMIC DNA]</scope>
    <source>
        <strain>bovine RF122 / ET3-1</strain>
    </source>
</reference>
<name>RUVB_STAAB</name>
<sequence>MNERMVDQSMHSEETDFELSLRPTRLRQYIGQNSIKSNLEVFIKAAKLRHEPLDHVLLFGPPGLGKTTLSNIIANEMEVNIRTVSGPSLERPGDLAAILSGLQPGDVLFIDEIHRLSSVVEEVLYPAMEDFFLDIIIGKGDEARSIRIDLPPFTLVGATTRAGSLTGPLRDRFGVHLRLEYYNESDLKEIIIRTAEVLGTGIDDESAIELAKRSRGTPRVANRLLKRVRDFQQVNEDEQIYIETTKHALGLLQVDQHGLDYIDHKMMNCIIKQYNGGPVGLDTIAVTIGEERITIEDVYEPFLIQKGFLERTPRGRKATPLAYGHFAKSNEERE</sequence>
<organism>
    <name type="scientific">Staphylococcus aureus (strain bovine RF122 / ET3-1)</name>
    <dbReference type="NCBI Taxonomy" id="273036"/>
    <lineage>
        <taxon>Bacteria</taxon>
        <taxon>Bacillati</taxon>
        <taxon>Bacillota</taxon>
        <taxon>Bacilli</taxon>
        <taxon>Bacillales</taxon>
        <taxon>Staphylococcaceae</taxon>
        <taxon>Staphylococcus</taxon>
    </lineage>
</organism>
<keyword id="KW-0067">ATP-binding</keyword>
<keyword id="KW-0963">Cytoplasm</keyword>
<keyword id="KW-0227">DNA damage</keyword>
<keyword id="KW-0233">DNA recombination</keyword>
<keyword id="KW-0234">DNA repair</keyword>
<keyword id="KW-0238">DNA-binding</keyword>
<keyword id="KW-0378">Hydrolase</keyword>
<keyword id="KW-0547">Nucleotide-binding</keyword>